<feature type="chain" id="PRO_0000221678" description="DNA-binding protein">
    <location>
        <begin position="1"/>
        <end position="512"/>
    </location>
</feature>
<feature type="region of interest" description="Disordered" evidence="2">
    <location>
        <begin position="1"/>
        <end position="105"/>
    </location>
</feature>
<feature type="region of interest" description="Flexible loop" evidence="1">
    <location>
        <begin position="276"/>
        <end position="310"/>
    </location>
</feature>
<feature type="region of interest" description="C-terminal arm, DBP binding" evidence="1">
    <location>
        <begin position="495"/>
        <end position="512"/>
    </location>
</feature>
<feature type="compositionally biased region" description="Basic and acidic residues" evidence="2">
    <location>
        <begin position="9"/>
        <end position="21"/>
    </location>
</feature>
<feature type="compositionally biased region" description="Pro residues" evidence="2">
    <location>
        <begin position="69"/>
        <end position="78"/>
    </location>
</feature>
<feature type="compositionally biased region" description="Basic residues" evidence="2">
    <location>
        <begin position="79"/>
        <end position="88"/>
    </location>
</feature>
<feature type="compositionally biased region" description="Acidic residues" evidence="2">
    <location>
        <begin position="96"/>
        <end position="105"/>
    </location>
</feature>
<feature type="binding site" evidence="1">
    <location>
        <position position="263"/>
    </location>
    <ligand>
        <name>Zn(2+)</name>
        <dbReference type="ChEBI" id="CHEBI:29105"/>
        <label>1</label>
    </ligand>
</feature>
<feature type="binding site" evidence="1">
    <location>
        <position position="265"/>
    </location>
    <ligand>
        <name>Zn(2+)</name>
        <dbReference type="ChEBI" id="CHEBI:29105"/>
        <label>1</label>
    </ligand>
</feature>
<feature type="binding site" evidence="1">
    <location>
        <position position="318"/>
    </location>
    <ligand>
        <name>Zn(2+)</name>
        <dbReference type="ChEBI" id="CHEBI:29105"/>
        <label>1</label>
    </ligand>
</feature>
<feature type="binding site" evidence="1">
    <location>
        <position position="334"/>
    </location>
    <ligand>
        <name>Zn(2+)</name>
        <dbReference type="ChEBI" id="CHEBI:29105"/>
        <label>1</label>
    </ligand>
</feature>
<feature type="binding site" evidence="1">
    <location>
        <position position="376"/>
    </location>
    <ligand>
        <name>Zn(2+)</name>
        <dbReference type="ChEBI" id="CHEBI:29105"/>
        <label>2</label>
    </ligand>
</feature>
<feature type="binding site" evidence="1">
    <location>
        <position position="378"/>
    </location>
    <ligand>
        <name>Zn(2+)</name>
        <dbReference type="ChEBI" id="CHEBI:29105"/>
        <label>2</label>
    </ligand>
</feature>
<feature type="binding site" evidence="1">
    <location>
        <position position="430"/>
    </location>
    <ligand>
        <name>Zn(2+)</name>
        <dbReference type="ChEBI" id="CHEBI:29105"/>
        <label>2</label>
    </ligand>
</feature>
<feature type="binding site" evidence="1">
    <location>
        <position position="447"/>
    </location>
    <ligand>
        <name>Zn(2+)</name>
        <dbReference type="ChEBI" id="CHEBI:29105"/>
        <label>2</label>
    </ligand>
</feature>
<feature type="modified residue" description="Phosphotyrosine; by host" evidence="1">
    <location>
        <position position="174"/>
    </location>
</feature>
<gene>
    <name evidence="1" type="primary">DBP</name>
</gene>
<reference key="1">
    <citation type="journal article" date="1985" name="Virology">
        <title>Sequence of the DNA-binding protein of a human subgroup E adenovirus (type 4): comparisons with subgroup A (type 12), subgroup B (type 7), and subgroup C (type 5).</title>
        <authorList>
            <person name="Kitchingman G.R."/>
        </authorList>
    </citation>
    <scope>NUCLEOTIDE SEQUENCE [GENOMIC DNA]</scope>
</reference>
<organismHost>
    <name type="scientific">Homo sapiens</name>
    <name type="common">Human</name>
    <dbReference type="NCBI Taxonomy" id="9606"/>
</organismHost>
<name>DNB2_ADE04</name>
<proteinExistence type="inferred from homology"/>
<keyword id="KW-0235">DNA replication</keyword>
<keyword id="KW-0238">DNA-binding</keyword>
<keyword id="KW-0244">Early protein</keyword>
<keyword id="KW-1048">Host nucleus</keyword>
<keyword id="KW-0945">Host-virus interaction</keyword>
<keyword id="KW-0479">Metal-binding</keyword>
<keyword id="KW-0597">Phosphoprotein</keyword>
<keyword id="KW-1194">Viral DNA replication</keyword>
<keyword id="KW-0862">Zinc</keyword>
<dbReference type="EMBL" id="M12407">
    <property type="protein sequence ID" value="AAA42465.1"/>
    <property type="molecule type" value="Genomic_DNA"/>
</dbReference>
<dbReference type="PIR" id="A23324">
    <property type="entry name" value="ERADA4"/>
</dbReference>
<dbReference type="SMR" id="P06500"/>
<dbReference type="GO" id="GO:0042025">
    <property type="term" value="C:host cell nucleus"/>
    <property type="evidence" value="ECO:0000250"/>
    <property type="project" value="UniProtKB"/>
</dbReference>
<dbReference type="GO" id="GO:0019028">
    <property type="term" value="C:viral capsid"/>
    <property type="evidence" value="ECO:0000250"/>
    <property type="project" value="UniProtKB"/>
</dbReference>
<dbReference type="GO" id="GO:0003677">
    <property type="term" value="F:DNA binding"/>
    <property type="evidence" value="ECO:0000250"/>
    <property type="project" value="UniProtKB"/>
</dbReference>
<dbReference type="GO" id="GO:0008270">
    <property type="term" value="F:zinc ion binding"/>
    <property type="evidence" value="ECO:0007669"/>
    <property type="project" value="UniProtKB-UniRule"/>
</dbReference>
<dbReference type="GO" id="GO:0006260">
    <property type="term" value="P:DNA replication"/>
    <property type="evidence" value="ECO:0007669"/>
    <property type="project" value="UniProtKB-KW"/>
</dbReference>
<dbReference type="GO" id="GO:0006351">
    <property type="term" value="P:DNA-templated transcription"/>
    <property type="evidence" value="ECO:0007669"/>
    <property type="project" value="UniProtKB-UniRule"/>
</dbReference>
<dbReference type="GO" id="GO:0045740">
    <property type="term" value="P:positive regulation of DNA replication"/>
    <property type="evidence" value="ECO:0007669"/>
    <property type="project" value="UniProtKB-UniRule"/>
</dbReference>
<dbReference type="GO" id="GO:0039693">
    <property type="term" value="P:viral DNA genome replication"/>
    <property type="evidence" value="ECO:0000250"/>
    <property type="project" value="UniProtKB"/>
</dbReference>
<dbReference type="GO" id="GO:0039687">
    <property type="term" value="P:viral DNA strand displacement replication"/>
    <property type="evidence" value="ECO:0000250"/>
    <property type="project" value="UniProtKB"/>
</dbReference>
<dbReference type="FunFam" id="1.10.269.10:FF:000001">
    <property type="entry name" value="DNA-binding protein"/>
    <property type="match status" value="1"/>
</dbReference>
<dbReference type="FunFam" id="3.90.148.10:FF:000001">
    <property type="entry name" value="DNA-binding protein"/>
    <property type="match status" value="1"/>
</dbReference>
<dbReference type="FunFam" id="3.90.148.10:FF:000002">
    <property type="entry name" value="DNA-binding protein"/>
    <property type="match status" value="1"/>
</dbReference>
<dbReference type="Gene3D" id="3.90.148.10">
    <property type="entry name" value="Adenovirus DNA-binding, C-terminal domain superfamily/Adenovirus DNA-binding, zinc binding domain"/>
    <property type="match status" value="2"/>
</dbReference>
<dbReference type="Gene3D" id="1.10.269.10">
    <property type="entry name" value="Adenovirus DNA-binding, N-terminal domain"/>
    <property type="match status" value="1"/>
</dbReference>
<dbReference type="HAMAP" id="MF_04054">
    <property type="entry name" value="ADV_DNB2"/>
    <property type="match status" value="1"/>
</dbReference>
<dbReference type="InterPro" id="IPR036367">
    <property type="entry name" value="Ad_DBP_C_sf"/>
</dbReference>
<dbReference type="InterPro" id="IPR036368">
    <property type="entry name" value="ADBP_zn-bd_sf"/>
</dbReference>
<dbReference type="InterPro" id="IPR003176">
    <property type="entry name" value="Adenovirus_DNA-bd_a"/>
</dbReference>
<dbReference type="InterPro" id="IPR036362">
    <property type="entry name" value="Adenovirus_DNA-bd_N_sf"/>
</dbReference>
<dbReference type="InterPro" id="IPR005376">
    <property type="entry name" value="Adenovirus_DNA-bd_zn-bd"/>
</dbReference>
<dbReference type="InterPro" id="IPR037540">
    <property type="entry name" value="ADV_DNB2"/>
</dbReference>
<dbReference type="Pfam" id="PF02236">
    <property type="entry name" value="Viral_DNA_bi"/>
    <property type="match status" value="1"/>
</dbReference>
<dbReference type="Pfam" id="PF03728">
    <property type="entry name" value="Viral_DNA_Zn_bi"/>
    <property type="match status" value="2"/>
</dbReference>
<dbReference type="SUPFAM" id="SSF47724">
    <property type="entry name" value="Domain of early E2A DNA-binding protein, ADDBP"/>
    <property type="match status" value="1"/>
</dbReference>
<dbReference type="SUPFAM" id="SSF57917">
    <property type="entry name" value="Zn-binding domains of ADDBP"/>
    <property type="match status" value="2"/>
</dbReference>
<accession>P06500</accession>
<comment type="function">
    <text evidence="1">Plays a role in the elongation phase of viral strand displacement replication by unwinding the template in an ATP-independent fashion, employing its capacity to form multimers. Also enhances the rate of initiation. Released from template upon second strand synthesis. Assembles in complex with viral pTP, viral pol, host NFIA and host POU2F1/OCT1 on viral origin of replication. Covers the whole ssDNA genome during synthesis. The complementary strand synthesis induces its relese from DNA template. May inhibit cellular transcription mediated by the interaction between host SRCAP and CBP.</text>
</comment>
<comment type="subunit">
    <text evidence="1">Homomultimerizes on viral ssDNA bound to pTP. Forms a initiation complex with viral polymerase, pTP and hosts NFIA and POU2F1/OCT1. Interacts with host SRCAP.</text>
</comment>
<comment type="subcellular location">
    <subcellularLocation>
        <location evidence="1">Host nucleus</location>
    </subcellularLocation>
    <text evidence="1">Accumulates in infected cells.</text>
</comment>
<comment type="domain">
    <text evidence="1">The C-terminal arm bridges DBP molecules together, thereby creating a chain.</text>
</comment>
<comment type="similarity">
    <text evidence="1">Belongs to the adenoviridae E2A DNA-binding protein family.</text>
</comment>
<sequence length="512" mass="57367">MAGRGGSQLERRRERTPDRGRGSASHPPGRESPSPPPLPLKRHTYRRVVSDQEEEIVVVSENSRSPSPQEQPPPPQQPPKKKPRKTKHVPLQDVSQDSEDEREAEEELGAVGFSYPPVRITGKDGKRSFETLNENDPLTKAASAKMAVTNPLSLPIVSAWEKGMEIMNMLMERYRVESDLKSNFQLMPEQGEVYRRICHLYINEEHRGIPLTFTSNKTLTTMMGRFLQGFVHAHSQIAHKNWESTGCALWLHGCTEVEGKLRCLHGTTMIQKEHMIEMDVASENGQRALKENPDRAKVTQNRWGRSVVQLANNDARCCVHDAGCATNQFSSKSCGVFFTEGAKAQQAFKQLEAFMKAMYPGMNADQAQVMLIPLHCDCNHKPGCVPTMGRQTCKMTPFGMANAEDLDVDGITDATVLASVKHPALMVFQCCNPVYRNSRAQNAGPNCDFKISAPDLLGALQLTRKLWTDSFPDTLLPKLLIPEFKWLAKYQFRNVSLPAGHAETSRQNPFDF</sequence>
<evidence type="ECO:0000255" key="1">
    <source>
        <dbReference type="HAMAP-Rule" id="MF_04054"/>
    </source>
</evidence>
<evidence type="ECO:0000256" key="2">
    <source>
        <dbReference type="SAM" id="MobiDB-lite"/>
    </source>
</evidence>
<organism>
    <name type="scientific">Human adenovirus E serotype 4</name>
    <name type="common">HAdV-4</name>
    <name type="synonym">Human adenovirus 4</name>
    <dbReference type="NCBI Taxonomy" id="28280"/>
    <lineage>
        <taxon>Viruses</taxon>
        <taxon>Varidnaviria</taxon>
        <taxon>Bamfordvirae</taxon>
        <taxon>Preplasmiviricota</taxon>
        <taxon>Tectiliviricetes</taxon>
        <taxon>Rowavirales</taxon>
        <taxon>Adenoviridae</taxon>
        <taxon>Mastadenovirus</taxon>
        <taxon>Human mastadenovirus E</taxon>
    </lineage>
</organism>
<protein>
    <recommendedName>
        <fullName evidence="1">DNA-binding protein</fullName>
        <shortName evidence="1">DBP</shortName>
    </recommendedName>
    <alternativeName>
        <fullName evidence="1">Early 2A protein</fullName>
    </alternativeName>
    <alternativeName>
        <fullName evidence="1">Early E2A DNA-binding protein</fullName>
    </alternativeName>
</protein>